<reference key="1">
    <citation type="submission" date="1996-11" db="EMBL/GenBank/DDBJ databases">
        <title>The 10.7 kb 'nonessential' region of bacteriophage T4 between the genes tk and nrdC: twenty new t4 genes, generally conserved among T-even phages.</title>
        <authorList>
            <person name="Mzhavia N."/>
            <person name="Marusich E."/>
            <person name="Djavakhishvili T."/>
            <person name="Neitzel J."/>
            <person name="Peterson S."/>
            <person name="Awaya M."/>
            <person name="Eidermiller J."/>
            <person name="Canada D."/>
            <person name="Tracy J."/>
            <person name="Gailbreath K."/>
            <person name="Paddison P."/>
            <person name="Anderson B."/>
            <person name="Stidham T."/>
            <person name="Blattner F."/>
            <person name="Kutter E.M."/>
        </authorList>
    </citation>
    <scope>NUCLEOTIDE SEQUENCE [GENOMIC DNA]</scope>
</reference>
<reference key="2">
    <citation type="journal article" date="2003" name="Microbiol. Mol. Biol. Rev.">
        <title>Bacteriophage T4 genome.</title>
        <authorList>
            <person name="Miller E.S."/>
            <person name="Kutter E."/>
            <person name="Mosig G."/>
            <person name="Arisaka F."/>
            <person name="Kunisawa T."/>
            <person name="Ruger W."/>
        </authorList>
    </citation>
    <scope>NUCLEOTIDE SEQUENCE [LARGE SCALE GENOMIC DNA]</scope>
</reference>
<organism>
    <name type="scientific">Enterobacteria phage T4</name>
    <name type="common">Bacteriophage T4</name>
    <dbReference type="NCBI Taxonomy" id="10665"/>
    <lineage>
        <taxon>Viruses</taxon>
        <taxon>Duplodnaviria</taxon>
        <taxon>Heunggongvirae</taxon>
        <taxon>Uroviricota</taxon>
        <taxon>Caudoviricetes</taxon>
        <taxon>Straboviridae</taxon>
        <taxon>Tevenvirinae</taxon>
        <taxon>Tequatrovirus</taxon>
    </lineage>
</organism>
<accession>P39257</accession>
<proteinExistence type="predicted"/>
<organismHost>
    <name type="scientific">Escherichia coli</name>
    <dbReference type="NCBI Taxonomy" id="562"/>
</organismHost>
<keyword id="KW-1185">Reference proteome</keyword>
<sequence length="275" mass="31725">MSVVINNVNAVIKSLVNKKMMNEWTVLRRGEPDKFFHRFNPTLDLNVIDRDVHAEILDKFKVDIGFGLEKHLQRTNGSGMSLSNRIMKALNKIGALSRINASEILRNYNKGYDLYGRLMPKLSFDQMIADLWENQRRLLALGARLAKGLDKQMIFKTNNTEDLKCFKFSTRGDDYYIRARSTDYVNMGHHLCLAFEVLKEAGTLEYSSGAKCPIGSNCILIYRPNESSSTKLPTKPVPVRSNEKHSEQIDYFNKQIEELIFLFNNMMMKFSDYLD</sequence>
<name>Y05B_BPT4</name>
<gene>
    <name type="primary">y05B</name>
    <name type="synonym">nrdC.6</name>
</gene>
<dbReference type="EMBL" id="U76612">
    <property type="protein sequence ID" value="AAB26976.1"/>
    <property type="molecule type" value="Genomic_DNA"/>
</dbReference>
<dbReference type="EMBL" id="AF158101">
    <property type="protein sequence ID" value="AAD42637.1"/>
    <property type="molecule type" value="Genomic_DNA"/>
</dbReference>
<dbReference type="RefSeq" id="NP_049704.1">
    <property type="nucleotide sequence ID" value="NC_000866.4"/>
</dbReference>
<dbReference type="GeneID" id="1258637"/>
<dbReference type="KEGG" id="vg:1258637"/>
<dbReference type="OrthoDB" id="6441at10239"/>
<dbReference type="Proteomes" id="UP000009087">
    <property type="component" value="Segment"/>
</dbReference>
<feature type="chain" id="PRO_0000165120" description="Uncharacterized 31.7 kDa protein in nrdC-mobD intergenic region">
    <location>
        <begin position="1"/>
        <end position="275"/>
    </location>
</feature>
<protein>
    <recommendedName>
        <fullName>Uncharacterized 31.7 kDa protein in nrdC-mobD intergenic region</fullName>
    </recommendedName>
</protein>